<comment type="function">
    <text evidence="1">The RuvA-RuvB-RuvC complex processes Holliday junction (HJ) DNA during genetic recombination and DNA repair, while the RuvA-RuvB complex plays an important role in the rescue of blocked DNA replication forks via replication fork reversal (RFR). RuvA specifically binds to HJ cruciform DNA, conferring on it an open structure. The RuvB hexamer acts as an ATP-dependent pump, pulling dsDNA into and through the RuvAB complex. RuvB forms 2 homohexamers on either side of HJ DNA bound by 1 or 2 RuvA tetramers; 4 subunits per hexamer contact DNA at a time. Coordinated motions by a converter formed by DNA-disengaged RuvB subunits stimulates ATP hydrolysis and nucleotide exchange. Immobilization of the converter enables RuvB to convert the ATP-contained energy into a lever motion, pulling 2 nucleotides of DNA out of the RuvA tetramer per ATP hydrolyzed, thus driving DNA branch migration. The RuvB motors rotate together with the DNA substrate, which together with the progressing nucleotide cycle form the mechanistic basis for DNA recombination by continuous HJ branch migration. Branch migration allows RuvC to scan DNA until it finds its consensus sequence, where it cleaves and resolves cruciform DNA.</text>
</comment>
<comment type="catalytic activity">
    <reaction evidence="1">
        <text>ATP + H2O = ADP + phosphate + H(+)</text>
        <dbReference type="Rhea" id="RHEA:13065"/>
        <dbReference type="ChEBI" id="CHEBI:15377"/>
        <dbReference type="ChEBI" id="CHEBI:15378"/>
        <dbReference type="ChEBI" id="CHEBI:30616"/>
        <dbReference type="ChEBI" id="CHEBI:43474"/>
        <dbReference type="ChEBI" id="CHEBI:456216"/>
    </reaction>
</comment>
<comment type="subunit">
    <text evidence="1">Homohexamer. Forms an RuvA(8)-RuvB(12)-Holliday junction (HJ) complex. HJ DNA is sandwiched between 2 RuvA tetramers; dsDNA enters through RuvA and exits via RuvB. An RuvB hexamer assembles on each DNA strand where it exits the tetramer. Each RuvB hexamer is contacted by two RuvA subunits (via domain III) on 2 adjacent RuvB subunits; this complex drives branch migration. In the full resolvosome a probable DNA-RuvA(4)-RuvB(12)-RuvC(2) complex forms which resolves the HJ.</text>
</comment>
<comment type="subcellular location">
    <subcellularLocation>
        <location evidence="1">Cytoplasm</location>
    </subcellularLocation>
</comment>
<comment type="domain">
    <text evidence="1">Has 3 domains, the large (RuvB-L) and small ATPase (RuvB-S) domains and the C-terminal head (RuvB-H) domain. The head domain binds DNA, while the ATPase domains jointly bind ATP, ADP or are empty depending on the state of the subunit in the translocation cycle. During a single DNA translocation step the structure of each domain remains the same, but their relative positions change.</text>
</comment>
<comment type="similarity">
    <text evidence="1">Belongs to the RuvB family.</text>
</comment>
<organism>
    <name type="scientific">Synechococcus sp. (strain WH7803)</name>
    <dbReference type="NCBI Taxonomy" id="32051"/>
    <lineage>
        <taxon>Bacteria</taxon>
        <taxon>Bacillati</taxon>
        <taxon>Cyanobacteriota</taxon>
        <taxon>Cyanophyceae</taxon>
        <taxon>Synechococcales</taxon>
        <taxon>Synechococcaceae</taxon>
        <taxon>Synechococcus</taxon>
    </lineage>
</organism>
<sequence>MAIVSSNAASQRPRPDRGPDRVPNRVVDGARQAEDDRDPGRVGAKEDSLRPKRLADYIGQRELKQVLGIAVQAAVGRGEALDHVLLYGPPGLGKTTMAMVLAEELGVTCRITSAPALERPRDIVGLLVTLQPKDLLFIDEIHRLSRVAEELLYPAMEDRRLDLTVGKGSTARTRALDLPPFTLVGATTRAGALSSPLRDRFGLIQRLEFYGLEDLQAIVERAAGLLDLDLSAAACTEIARRCRGTPRIANRLLRRVRDVACVRACAGRIDQALVDEALTLHRVDGRGLDASDRRLMELLLQSHGGGPAGLDTLAAALGEDPATLESVVEPYLLQLGFLQRTPRGRVVTAAGRGHLGWPYPQEQAA</sequence>
<dbReference type="EC" id="3.6.4.-" evidence="1"/>
<dbReference type="EMBL" id="CT971583">
    <property type="protein sequence ID" value="CAK22611.1"/>
    <property type="molecule type" value="Genomic_DNA"/>
</dbReference>
<dbReference type="SMR" id="A5GI46"/>
<dbReference type="STRING" id="32051.SynWH7803_0185"/>
<dbReference type="KEGG" id="syx:SynWH7803_0185"/>
<dbReference type="eggNOG" id="COG2255">
    <property type="taxonomic scope" value="Bacteria"/>
</dbReference>
<dbReference type="HOGENOM" id="CLU_055599_1_0_3"/>
<dbReference type="OrthoDB" id="9804478at2"/>
<dbReference type="Proteomes" id="UP000001566">
    <property type="component" value="Chromosome"/>
</dbReference>
<dbReference type="GO" id="GO:0005737">
    <property type="term" value="C:cytoplasm"/>
    <property type="evidence" value="ECO:0007669"/>
    <property type="project" value="UniProtKB-SubCell"/>
</dbReference>
<dbReference type="GO" id="GO:0048476">
    <property type="term" value="C:Holliday junction resolvase complex"/>
    <property type="evidence" value="ECO:0007669"/>
    <property type="project" value="UniProtKB-UniRule"/>
</dbReference>
<dbReference type="GO" id="GO:0005524">
    <property type="term" value="F:ATP binding"/>
    <property type="evidence" value="ECO:0007669"/>
    <property type="project" value="UniProtKB-UniRule"/>
</dbReference>
<dbReference type="GO" id="GO:0016887">
    <property type="term" value="F:ATP hydrolysis activity"/>
    <property type="evidence" value="ECO:0007669"/>
    <property type="project" value="InterPro"/>
</dbReference>
<dbReference type="GO" id="GO:0000400">
    <property type="term" value="F:four-way junction DNA binding"/>
    <property type="evidence" value="ECO:0007669"/>
    <property type="project" value="UniProtKB-UniRule"/>
</dbReference>
<dbReference type="GO" id="GO:0009378">
    <property type="term" value="F:four-way junction helicase activity"/>
    <property type="evidence" value="ECO:0007669"/>
    <property type="project" value="InterPro"/>
</dbReference>
<dbReference type="GO" id="GO:0006310">
    <property type="term" value="P:DNA recombination"/>
    <property type="evidence" value="ECO:0007669"/>
    <property type="project" value="UniProtKB-UniRule"/>
</dbReference>
<dbReference type="GO" id="GO:0006281">
    <property type="term" value="P:DNA repair"/>
    <property type="evidence" value="ECO:0007669"/>
    <property type="project" value="UniProtKB-UniRule"/>
</dbReference>
<dbReference type="CDD" id="cd00009">
    <property type="entry name" value="AAA"/>
    <property type="match status" value="1"/>
</dbReference>
<dbReference type="Gene3D" id="1.10.8.60">
    <property type="match status" value="1"/>
</dbReference>
<dbReference type="Gene3D" id="3.40.50.300">
    <property type="entry name" value="P-loop containing nucleotide triphosphate hydrolases"/>
    <property type="match status" value="1"/>
</dbReference>
<dbReference type="Gene3D" id="1.10.10.10">
    <property type="entry name" value="Winged helix-like DNA-binding domain superfamily/Winged helix DNA-binding domain"/>
    <property type="match status" value="1"/>
</dbReference>
<dbReference type="HAMAP" id="MF_00016">
    <property type="entry name" value="DNA_HJ_migration_RuvB"/>
    <property type="match status" value="1"/>
</dbReference>
<dbReference type="InterPro" id="IPR003593">
    <property type="entry name" value="AAA+_ATPase"/>
</dbReference>
<dbReference type="InterPro" id="IPR041445">
    <property type="entry name" value="AAA_lid_4"/>
</dbReference>
<dbReference type="InterPro" id="IPR004605">
    <property type="entry name" value="DNA_helicase_Holl-junc_RuvB"/>
</dbReference>
<dbReference type="InterPro" id="IPR027417">
    <property type="entry name" value="P-loop_NTPase"/>
</dbReference>
<dbReference type="InterPro" id="IPR008824">
    <property type="entry name" value="RuvB-like_N"/>
</dbReference>
<dbReference type="InterPro" id="IPR008823">
    <property type="entry name" value="RuvB_C"/>
</dbReference>
<dbReference type="InterPro" id="IPR036388">
    <property type="entry name" value="WH-like_DNA-bd_sf"/>
</dbReference>
<dbReference type="InterPro" id="IPR036390">
    <property type="entry name" value="WH_DNA-bd_sf"/>
</dbReference>
<dbReference type="NCBIfam" id="NF000868">
    <property type="entry name" value="PRK00080.1"/>
    <property type="match status" value="1"/>
</dbReference>
<dbReference type="NCBIfam" id="TIGR00635">
    <property type="entry name" value="ruvB"/>
    <property type="match status" value="1"/>
</dbReference>
<dbReference type="PANTHER" id="PTHR42848">
    <property type="match status" value="1"/>
</dbReference>
<dbReference type="PANTHER" id="PTHR42848:SF1">
    <property type="entry name" value="HOLLIDAY JUNCTION BRANCH MIGRATION COMPLEX SUBUNIT RUVB"/>
    <property type="match status" value="1"/>
</dbReference>
<dbReference type="Pfam" id="PF17864">
    <property type="entry name" value="AAA_lid_4"/>
    <property type="match status" value="1"/>
</dbReference>
<dbReference type="Pfam" id="PF05491">
    <property type="entry name" value="RuvB_C"/>
    <property type="match status" value="1"/>
</dbReference>
<dbReference type="Pfam" id="PF05496">
    <property type="entry name" value="RuvB_N"/>
    <property type="match status" value="1"/>
</dbReference>
<dbReference type="SMART" id="SM00382">
    <property type="entry name" value="AAA"/>
    <property type="match status" value="1"/>
</dbReference>
<dbReference type="SUPFAM" id="SSF52540">
    <property type="entry name" value="P-loop containing nucleoside triphosphate hydrolases"/>
    <property type="match status" value="1"/>
</dbReference>
<dbReference type="SUPFAM" id="SSF46785">
    <property type="entry name" value="Winged helix' DNA-binding domain"/>
    <property type="match status" value="1"/>
</dbReference>
<reference key="1">
    <citation type="submission" date="2006-05" db="EMBL/GenBank/DDBJ databases">
        <authorList>
            <consortium name="Genoscope"/>
        </authorList>
    </citation>
    <scope>NUCLEOTIDE SEQUENCE [LARGE SCALE GENOMIC DNA]</scope>
    <source>
        <strain>WH7803</strain>
    </source>
</reference>
<accession>A5GI46</accession>
<proteinExistence type="inferred from homology"/>
<gene>
    <name evidence="1" type="primary">ruvB</name>
    <name type="ordered locus">SynWH7803_0185</name>
</gene>
<keyword id="KW-0067">ATP-binding</keyword>
<keyword id="KW-0963">Cytoplasm</keyword>
<keyword id="KW-0227">DNA damage</keyword>
<keyword id="KW-0233">DNA recombination</keyword>
<keyword id="KW-0234">DNA repair</keyword>
<keyword id="KW-0238">DNA-binding</keyword>
<keyword id="KW-0378">Hydrolase</keyword>
<keyword id="KW-0547">Nucleotide-binding</keyword>
<keyword id="KW-1185">Reference proteome</keyword>
<evidence type="ECO:0000255" key="1">
    <source>
        <dbReference type="HAMAP-Rule" id="MF_00016"/>
    </source>
</evidence>
<evidence type="ECO:0000256" key="2">
    <source>
        <dbReference type="SAM" id="MobiDB-lite"/>
    </source>
</evidence>
<protein>
    <recommendedName>
        <fullName evidence="1">Holliday junction branch migration complex subunit RuvB</fullName>
        <ecNumber evidence="1">3.6.4.-</ecNumber>
    </recommendedName>
</protein>
<name>RUVB_SYNPW</name>
<feature type="chain" id="PRO_1000001491" description="Holliday junction branch migration complex subunit RuvB">
    <location>
        <begin position="1"/>
        <end position="365"/>
    </location>
</feature>
<feature type="region of interest" description="Disordered" evidence="2">
    <location>
        <begin position="1"/>
        <end position="48"/>
    </location>
</feature>
<feature type="region of interest" description="Large ATPase domain (RuvB-L)" evidence="1">
    <location>
        <begin position="13"/>
        <end position="210"/>
    </location>
</feature>
<feature type="region of interest" description="Small ATPAse domain (RuvB-S)" evidence="1">
    <location>
        <begin position="211"/>
        <end position="282"/>
    </location>
</feature>
<feature type="region of interest" description="Head domain (RuvB-H)" evidence="1">
    <location>
        <begin position="285"/>
        <end position="365"/>
    </location>
</feature>
<feature type="compositionally biased region" description="Polar residues" evidence="2">
    <location>
        <begin position="1"/>
        <end position="10"/>
    </location>
</feature>
<feature type="compositionally biased region" description="Basic and acidic residues" evidence="2">
    <location>
        <begin position="13"/>
        <end position="23"/>
    </location>
</feature>
<feature type="compositionally biased region" description="Basic and acidic residues" evidence="2">
    <location>
        <begin position="31"/>
        <end position="48"/>
    </location>
</feature>
<feature type="binding site" evidence="1">
    <location>
        <position position="49"/>
    </location>
    <ligand>
        <name>ATP</name>
        <dbReference type="ChEBI" id="CHEBI:30616"/>
    </ligand>
</feature>
<feature type="binding site" evidence="1">
    <location>
        <position position="50"/>
    </location>
    <ligand>
        <name>ATP</name>
        <dbReference type="ChEBI" id="CHEBI:30616"/>
    </ligand>
</feature>
<feature type="binding site" evidence="1">
    <location>
        <position position="91"/>
    </location>
    <ligand>
        <name>ATP</name>
        <dbReference type="ChEBI" id="CHEBI:30616"/>
    </ligand>
</feature>
<feature type="binding site" evidence="1">
    <location>
        <position position="94"/>
    </location>
    <ligand>
        <name>ATP</name>
        <dbReference type="ChEBI" id="CHEBI:30616"/>
    </ligand>
</feature>
<feature type="binding site" evidence="1">
    <location>
        <position position="95"/>
    </location>
    <ligand>
        <name>ATP</name>
        <dbReference type="ChEBI" id="CHEBI:30616"/>
    </ligand>
</feature>
<feature type="binding site" evidence="1">
    <location>
        <position position="95"/>
    </location>
    <ligand>
        <name>Mg(2+)</name>
        <dbReference type="ChEBI" id="CHEBI:18420"/>
    </ligand>
</feature>
<feature type="binding site" evidence="1">
    <location>
        <position position="96"/>
    </location>
    <ligand>
        <name>ATP</name>
        <dbReference type="ChEBI" id="CHEBI:30616"/>
    </ligand>
</feature>
<feature type="binding site" evidence="1">
    <location>
        <position position="200"/>
    </location>
    <ligand>
        <name>ATP</name>
        <dbReference type="ChEBI" id="CHEBI:30616"/>
    </ligand>
</feature>
<feature type="binding site" evidence="1">
    <location>
        <position position="210"/>
    </location>
    <ligand>
        <name>ATP</name>
        <dbReference type="ChEBI" id="CHEBI:30616"/>
    </ligand>
</feature>
<feature type="binding site" evidence="1">
    <location>
        <position position="247"/>
    </location>
    <ligand>
        <name>ATP</name>
        <dbReference type="ChEBI" id="CHEBI:30616"/>
    </ligand>
</feature>
<feature type="binding site" evidence="1">
    <location>
        <position position="340"/>
    </location>
    <ligand>
        <name>DNA</name>
        <dbReference type="ChEBI" id="CHEBI:16991"/>
    </ligand>
</feature>
<feature type="binding site" evidence="1">
    <location>
        <position position="345"/>
    </location>
    <ligand>
        <name>DNA</name>
        <dbReference type="ChEBI" id="CHEBI:16991"/>
    </ligand>
</feature>